<feature type="chain" id="PRO_0000157614" description="Large ribosomal subunit protein bL12c">
    <location>
        <begin position="1"/>
        <end position="131"/>
    </location>
</feature>
<feature type="region of interest" description="Disordered" evidence="2">
    <location>
        <begin position="107"/>
        <end position="131"/>
    </location>
</feature>
<feature type="compositionally biased region" description="Basic and acidic residues" evidence="2">
    <location>
        <begin position="110"/>
        <end position="131"/>
    </location>
</feature>
<protein>
    <recommendedName>
        <fullName evidence="1">Large ribosomal subunit protein bL12c</fullName>
    </recommendedName>
    <alternativeName>
        <fullName evidence="3">50S ribosomal protein L12, chloroplastic</fullName>
    </alternativeName>
</protein>
<gene>
    <name evidence="1" type="primary">rpl12</name>
</gene>
<comment type="function">
    <text evidence="1">Forms part of the ribosomal stalk which helps the ribosome interact with GTP-bound translation factors. Is thus essential for accurate translation.</text>
</comment>
<comment type="subunit">
    <text evidence="1">Homodimer. Part of the ribosomal stalk of the 50S ribosomal subunit. Forms a multimeric L10(L12)X complex, where L10 forms an elongated spine to which 2 to 4 L12 dimers bind in a sequential fashion. Binds GTP-bound translation factors.</text>
</comment>
<comment type="subcellular location">
    <subcellularLocation>
        <location>Plastid</location>
        <location>Chloroplast</location>
    </subcellularLocation>
</comment>
<comment type="similarity">
    <text evidence="1">Belongs to the bacterial ribosomal protein bL12 family.</text>
</comment>
<sequence>MSTKTNEILDILKSITLLEAAELVSQIEETFGVDASAPVGGGFMAAPGGAGTAAAEIVEEKTTFDVIIEDVASDKRVPVLKVVRNLTSLDLKEAKEAITSLPKVIQQGVSKDDAEASKKQLEDAGAKVKIS</sequence>
<geneLocation type="chloroplast"/>
<evidence type="ECO:0000255" key="1">
    <source>
        <dbReference type="HAMAP-Rule" id="MF_00368"/>
    </source>
</evidence>
<evidence type="ECO:0000256" key="2">
    <source>
        <dbReference type="SAM" id="MobiDB-lite"/>
    </source>
</evidence>
<evidence type="ECO:0000305" key="3"/>
<organism>
    <name type="scientific">Chlorella vulgaris</name>
    <name type="common">Green alga</name>
    <dbReference type="NCBI Taxonomy" id="3077"/>
    <lineage>
        <taxon>Eukaryota</taxon>
        <taxon>Viridiplantae</taxon>
        <taxon>Chlorophyta</taxon>
        <taxon>core chlorophytes</taxon>
        <taxon>Trebouxiophyceae</taxon>
        <taxon>Chlorellales</taxon>
        <taxon>Chlorellaceae</taxon>
        <taxon>Chlorella clade</taxon>
        <taxon>Chlorella</taxon>
    </lineage>
</organism>
<keyword id="KW-0150">Chloroplast</keyword>
<keyword id="KW-0934">Plastid</keyword>
<keyword id="KW-0687">Ribonucleoprotein</keyword>
<keyword id="KW-0689">Ribosomal protein</keyword>
<proteinExistence type="inferred from homology"/>
<dbReference type="EMBL" id="AB001684">
    <property type="protein sequence ID" value="BAA57991.1"/>
    <property type="molecule type" value="Genomic_DNA"/>
</dbReference>
<dbReference type="PIR" id="T07343">
    <property type="entry name" value="T07343"/>
</dbReference>
<dbReference type="RefSeq" id="NP_045915.1">
    <property type="nucleotide sequence ID" value="NC_001865.1"/>
</dbReference>
<dbReference type="SMR" id="P56345"/>
<dbReference type="GeneID" id="809203"/>
<dbReference type="GO" id="GO:0009507">
    <property type="term" value="C:chloroplast"/>
    <property type="evidence" value="ECO:0007669"/>
    <property type="project" value="UniProtKB-SubCell"/>
</dbReference>
<dbReference type="GO" id="GO:1990904">
    <property type="term" value="C:ribonucleoprotein complex"/>
    <property type="evidence" value="ECO:0007669"/>
    <property type="project" value="UniProtKB-KW"/>
</dbReference>
<dbReference type="GO" id="GO:0005840">
    <property type="term" value="C:ribosome"/>
    <property type="evidence" value="ECO:0007669"/>
    <property type="project" value="UniProtKB-KW"/>
</dbReference>
<dbReference type="GO" id="GO:0003729">
    <property type="term" value="F:mRNA binding"/>
    <property type="evidence" value="ECO:0007669"/>
    <property type="project" value="TreeGrafter"/>
</dbReference>
<dbReference type="GO" id="GO:0003735">
    <property type="term" value="F:structural constituent of ribosome"/>
    <property type="evidence" value="ECO:0007669"/>
    <property type="project" value="InterPro"/>
</dbReference>
<dbReference type="GO" id="GO:0006412">
    <property type="term" value="P:translation"/>
    <property type="evidence" value="ECO:0007669"/>
    <property type="project" value="UniProtKB-UniRule"/>
</dbReference>
<dbReference type="CDD" id="cd00387">
    <property type="entry name" value="Ribosomal_L7_L12"/>
    <property type="match status" value="1"/>
</dbReference>
<dbReference type="FunFam" id="3.30.1390.10:FF:000001">
    <property type="entry name" value="50S ribosomal protein L7/L12"/>
    <property type="match status" value="1"/>
</dbReference>
<dbReference type="Gene3D" id="3.30.1390.10">
    <property type="match status" value="1"/>
</dbReference>
<dbReference type="Gene3D" id="1.20.5.710">
    <property type="entry name" value="Single helix bin"/>
    <property type="match status" value="1"/>
</dbReference>
<dbReference type="HAMAP" id="MF_00368">
    <property type="entry name" value="Ribosomal_bL12"/>
    <property type="match status" value="1"/>
</dbReference>
<dbReference type="InterPro" id="IPR000206">
    <property type="entry name" value="Ribosomal_bL12"/>
</dbReference>
<dbReference type="InterPro" id="IPR013823">
    <property type="entry name" value="Ribosomal_bL12_C"/>
</dbReference>
<dbReference type="InterPro" id="IPR014719">
    <property type="entry name" value="Ribosomal_bL12_C/ClpS-like"/>
</dbReference>
<dbReference type="InterPro" id="IPR008932">
    <property type="entry name" value="Ribosomal_bL12_oligo"/>
</dbReference>
<dbReference type="InterPro" id="IPR036235">
    <property type="entry name" value="Ribosomal_bL12_oligo_N_sf"/>
</dbReference>
<dbReference type="NCBIfam" id="TIGR00855">
    <property type="entry name" value="L12"/>
    <property type="match status" value="1"/>
</dbReference>
<dbReference type="PANTHER" id="PTHR45987">
    <property type="entry name" value="39S RIBOSOMAL PROTEIN L12"/>
    <property type="match status" value="1"/>
</dbReference>
<dbReference type="PANTHER" id="PTHR45987:SF4">
    <property type="entry name" value="LARGE RIBOSOMAL SUBUNIT PROTEIN BL12M"/>
    <property type="match status" value="1"/>
</dbReference>
<dbReference type="Pfam" id="PF00542">
    <property type="entry name" value="Ribosomal_L12"/>
    <property type="match status" value="1"/>
</dbReference>
<dbReference type="Pfam" id="PF16320">
    <property type="entry name" value="Ribosomal_L12_N"/>
    <property type="match status" value="1"/>
</dbReference>
<dbReference type="SUPFAM" id="SSF54736">
    <property type="entry name" value="ClpS-like"/>
    <property type="match status" value="1"/>
</dbReference>
<dbReference type="SUPFAM" id="SSF48300">
    <property type="entry name" value="Ribosomal protein L7/12, oligomerisation (N-terminal) domain"/>
    <property type="match status" value="1"/>
</dbReference>
<name>RK12_CHLVU</name>
<reference key="1">
    <citation type="journal article" date="1997" name="Proc. Natl. Acad. Sci. U.S.A.">
        <title>Complete nucleotide sequence of the chloroplast genome from the green alga Chlorella vulgaris: the existence of genes possibly involved in chloroplast division.</title>
        <authorList>
            <person name="Wakasugi T."/>
            <person name="Nagai T."/>
            <person name="Kapoor M."/>
            <person name="Sugita M."/>
            <person name="Ito M."/>
            <person name="Ito S."/>
            <person name="Tsudzuki J."/>
            <person name="Nakashima K."/>
            <person name="Tsudzuki T."/>
            <person name="Suzuki Y."/>
            <person name="Hamada A."/>
            <person name="Ohta T."/>
            <person name="Inamura A."/>
            <person name="Yoshinaga K."/>
            <person name="Sugiura M."/>
        </authorList>
    </citation>
    <scope>NUCLEOTIDE SEQUENCE [LARGE SCALE GENOMIC DNA]</scope>
    <source>
        <strain>IAM C-27 / Tamiya</strain>
    </source>
</reference>
<accession>P56345</accession>